<sequence>MALSASLHLRQSQSLVMTPQLMQSIQLLQMNHLELSHFIAQEVEKNPLLEVQPADEPTISDREDAGPHPAETGGETDEAAGQSDLYDSAMSRSGERLSEGLDADFANVFPDDTAPQRADAPELLGQWKSMPGAGDAEGYDLDDFVGGRKTLRETLAEQLPFALSAVSDRLIARYFIDQLDDAGYLHADLAETAETLGAAGEDVARVLHVLQQFDPPGVFARTLGECLAIQLRARNRLDPAMEALVANLELLARRDFASLKKICGVDEEDLIDMLAEIRKLDPKPGTSFETGVFEAIIPDVVVRAAPDGGWLVELNPDALPRVLVNHDYFTEISRSSRKNSGEQAFLNECLQNANWLTRSLDQRARTIMKVASEIVRQQDAFLIHGVGHLRPLNLRIVADAIKMHESTVSRVTSNKYMLTPRGLFELKYFFTVSIGSAENGDAHSAESVRHRIRTMINQESADAVLSDDDIVDVLKQAGVDIARRTVAKYREAMSIPSSVQRRREKRALAKAAGF</sequence>
<dbReference type="EMBL" id="M16513">
    <property type="protein sequence ID" value="AAD15117.1"/>
    <property type="molecule type" value="Genomic_DNA"/>
</dbReference>
<dbReference type="EMBL" id="M24926">
    <property type="protein sequence ID" value="AAA26349.1"/>
    <property type="molecule type" value="Genomic_DNA"/>
</dbReference>
<dbReference type="EMBL" id="AL591688">
    <property type="protein sequence ID" value="CAC41818.1"/>
    <property type="molecule type" value="Genomic_DNA"/>
</dbReference>
<dbReference type="RefSeq" id="NP_384487.1">
    <property type="nucleotide sequence ID" value="NC_003047.1"/>
</dbReference>
<dbReference type="RefSeq" id="WP_010968540.1">
    <property type="nucleotide sequence ID" value="NC_003047.1"/>
</dbReference>
<dbReference type="SMR" id="P17263"/>
<dbReference type="EnsemblBacteria" id="CAC41818">
    <property type="protein sequence ID" value="CAC41818"/>
    <property type="gene ID" value="SMc01139"/>
</dbReference>
<dbReference type="KEGG" id="sme:SMc01139"/>
<dbReference type="PATRIC" id="fig|266834.11.peg.1753"/>
<dbReference type="eggNOG" id="COG1508">
    <property type="taxonomic scope" value="Bacteria"/>
</dbReference>
<dbReference type="HOGENOM" id="CLU_020569_0_0_5"/>
<dbReference type="OrthoDB" id="9814402at2"/>
<dbReference type="Proteomes" id="UP000001976">
    <property type="component" value="Chromosome"/>
</dbReference>
<dbReference type="GO" id="GO:0000428">
    <property type="term" value="C:DNA-directed RNA polymerase complex"/>
    <property type="evidence" value="ECO:0007669"/>
    <property type="project" value="UniProtKB-KW"/>
</dbReference>
<dbReference type="GO" id="GO:0003677">
    <property type="term" value="F:DNA binding"/>
    <property type="evidence" value="ECO:0007669"/>
    <property type="project" value="UniProtKB-KW"/>
</dbReference>
<dbReference type="GO" id="GO:0001216">
    <property type="term" value="F:DNA-binding transcription activator activity"/>
    <property type="evidence" value="ECO:0007669"/>
    <property type="project" value="InterPro"/>
</dbReference>
<dbReference type="GO" id="GO:0016779">
    <property type="term" value="F:nucleotidyltransferase activity"/>
    <property type="evidence" value="ECO:0007669"/>
    <property type="project" value="UniProtKB-KW"/>
</dbReference>
<dbReference type="GO" id="GO:0016987">
    <property type="term" value="F:sigma factor activity"/>
    <property type="evidence" value="ECO:0007669"/>
    <property type="project" value="UniProtKB-KW"/>
</dbReference>
<dbReference type="GO" id="GO:0006352">
    <property type="term" value="P:DNA-templated transcription initiation"/>
    <property type="evidence" value="ECO:0007669"/>
    <property type="project" value="InterPro"/>
</dbReference>
<dbReference type="GO" id="GO:0009399">
    <property type="term" value="P:nitrogen fixation"/>
    <property type="evidence" value="ECO:0007669"/>
    <property type="project" value="UniProtKB-KW"/>
</dbReference>
<dbReference type="Gene3D" id="1.10.10.60">
    <property type="entry name" value="Homeodomain-like"/>
    <property type="match status" value="1"/>
</dbReference>
<dbReference type="Gene3D" id="1.10.10.1330">
    <property type="entry name" value="RNA polymerase sigma-54 factor, core-binding domain"/>
    <property type="match status" value="1"/>
</dbReference>
<dbReference type="InterPro" id="IPR000394">
    <property type="entry name" value="RNA_pol_sigma_54"/>
</dbReference>
<dbReference type="InterPro" id="IPR007046">
    <property type="entry name" value="RNA_pol_sigma_54_core-bd"/>
</dbReference>
<dbReference type="InterPro" id="IPR007634">
    <property type="entry name" value="RNA_pol_sigma_54_DNA-bd"/>
</dbReference>
<dbReference type="InterPro" id="IPR038709">
    <property type="entry name" value="RpoN_core-bd_sf"/>
</dbReference>
<dbReference type="NCBIfam" id="NF004596">
    <property type="entry name" value="PRK05932.1-3"/>
    <property type="match status" value="1"/>
</dbReference>
<dbReference type="NCBIfam" id="NF009118">
    <property type="entry name" value="PRK12469.1"/>
    <property type="match status" value="1"/>
</dbReference>
<dbReference type="NCBIfam" id="TIGR02395">
    <property type="entry name" value="rpoN_sigma"/>
    <property type="match status" value="1"/>
</dbReference>
<dbReference type="PANTHER" id="PTHR32248">
    <property type="entry name" value="RNA POLYMERASE SIGMA-54 FACTOR"/>
    <property type="match status" value="1"/>
</dbReference>
<dbReference type="PANTHER" id="PTHR32248:SF4">
    <property type="entry name" value="RNA POLYMERASE SIGMA-54 FACTOR"/>
    <property type="match status" value="1"/>
</dbReference>
<dbReference type="Pfam" id="PF00309">
    <property type="entry name" value="Sigma54_AID"/>
    <property type="match status" value="1"/>
</dbReference>
<dbReference type="Pfam" id="PF04963">
    <property type="entry name" value="Sigma54_CBD"/>
    <property type="match status" value="1"/>
</dbReference>
<dbReference type="Pfam" id="PF04552">
    <property type="entry name" value="Sigma54_DBD"/>
    <property type="match status" value="1"/>
</dbReference>
<dbReference type="PIRSF" id="PIRSF000774">
    <property type="entry name" value="RpoN"/>
    <property type="match status" value="1"/>
</dbReference>
<dbReference type="PRINTS" id="PR00045">
    <property type="entry name" value="SIGMA54FCT"/>
</dbReference>
<dbReference type="PROSITE" id="PS00717">
    <property type="entry name" value="SIGMA54_1"/>
    <property type="match status" value="1"/>
</dbReference>
<dbReference type="PROSITE" id="PS00718">
    <property type="entry name" value="SIGMA54_2"/>
    <property type="match status" value="1"/>
</dbReference>
<dbReference type="PROSITE" id="PS50044">
    <property type="entry name" value="SIGMA54_3"/>
    <property type="match status" value="1"/>
</dbReference>
<comment type="function">
    <text>Sigma factors are initiation factors that promote the attachment of RNA polymerase to specific initiation sites and are then released. This sigma factor is responsible for the expression of the nitrogen fixation genes (nif operon), glnA and dctA for dicarboxylate transport. The open complex (sigma-54 and core RNA polymerase) serves as the receptor for receipt of the melting signal from the remotely bound activator proteins NifA, NtrC, or DctD for the expression of the regulated proteins.</text>
</comment>
<comment type="similarity">
    <text evidence="3">Belongs to the sigma-54 factor family.</text>
</comment>
<keyword id="KW-0238">DNA-binding</keyword>
<keyword id="KW-0240">DNA-directed RNA polymerase</keyword>
<keyword id="KW-0535">Nitrogen fixation</keyword>
<keyword id="KW-0548">Nucleotidyltransferase</keyword>
<keyword id="KW-1185">Reference proteome</keyword>
<keyword id="KW-0731">Sigma factor</keyword>
<keyword id="KW-0804">Transcription</keyword>
<keyword id="KW-0805">Transcription regulation</keyword>
<keyword id="KW-0808">Transferase</keyword>
<name>RP54_RHIME</name>
<evidence type="ECO:0000255" key="1"/>
<evidence type="ECO:0000256" key="2">
    <source>
        <dbReference type="SAM" id="MobiDB-lite"/>
    </source>
</evidence>
<evidence type="ECO:0000305" key="3"/>
<organism>
    <name type="scientific">Rhizobium meliloti (strain 1021)</name>
    <name type="common">Ensifer meliloti</name>
    <name type="synonym">Sinorhizobium meliloti</name>
    <dbReference type="NCBI Taxonomy" id="266834"/>
    <lineage>
        <taxon>Bacteria</taxon>
        <taxon>Pseudomonadati</taxon>
        <taxon>Pseudomonadota</taxon>
        <taxon>Alphaproteobacteria</taxon>
        <taxon>Hyphomicrobiales</taxon>
        <taxon>Rhizobiaceae</taxon>
        <taxon>Sinorhizobium/Ensifer group</taxon>
        <taxon>Sinorhizobium</taxon>
    </lineage>
</organism>
<feature type="chain" id="PRO_0000205538" description="RNA polymerase sigma-54 factor">
    <location>
        <begin position="1"/>
        <end position="514"/>
    </location>
</feature>
<feature type="DNA-binding region" description="H-T-H motif" evidence="1">
    <location>
        <begin position="393"/>
        <end position="412"/>
    </location>
</feature>
<feature type="region of interest" description="Disordered" evidence="2">
    <location>
        <begin position="57"/>
        <end position="83"/>
    </location>
</feature>
<feature type="short sequence motif" description="RPON box">
    <location>
        <begin position="482"/>
        <end position="490"/>
    </location>
</feature>
<feature type="sequence conflict" description="In Ref. 1." evidence="3" ref="1">
    <original>AKAAGF</original>
    <variation>PRPRDSERCRQAASA</variation>
    <location>
        <begin position="509"/>
        <end position="514"/>
    </location>
</feature>
<proteinExistence type="inferred from homology"/>
<reference key="1">
    <citation type="journal article" date="1987" name="J. Bacteriol.">
        <title>Rhizobium meliloti ntrA (rpoN) gene is required for diverse metabolic functions.</title>
        <authorList>
            <person name="Ronson C.W."/>
            <person name="Nixon B.T."/>
            <person name="Albright L.M."/>
            <person name="Ausubel F.M."/>
        </authorList>
    </citation>
    <scope>NUCLEOTIDE SEQUENCE [GENOMIC DNA]</scope>
</reference>
<reference key="2">
    <citation type="journal article" date="1989" name="J. Bacteriol.">
        <title>Identification of a gene linked to Rhizobium meliloti ntrA whose product is homologous to a family to ATP-binding proteins.</title>
        <authorList>
            <person name="Albright L.M."/>
            <person name="Ronson C.W."/>
            <person name="Nixon B.T."/>
            <person name="Ausubel F.M."/>
        </authorList>
    </citation>
    <scope>SEQUENCE REVISION TO C-TERMINUS</scope>
</reference>
<reference key="3">
    <citation type="journal article" date="2001" name="Proc. Natl. Acad. Sci. U.S.A.">
        <title>Analysis of the chromosome sequence of the legume symbiont Sinorhizobium meliloti strain 1021.</title>
        <authorList>
            <person name="Capela D."/>
            <person name="Barloy-Hubler F."/>
            <person name="Gouzy J."/>
            <person name="Bothe G."/>
            <person name="Ampe F."/>
            <person name="Batut J."/>
            <person name="Boistard P."/>
            <person name="Becker A."/>
            <person name="Boutry M."/>
            <person name="Cadieu E."/>
            <person name="Dreano S."/>
            <person name="Gloux S."/>
            <person name="Godrie T."/>
            <person name="Goffeau A."/>
            <person name="Kahn D."/>
            <person name="Kiss E."/>
            <person name="Lelaure V."/>
            <person name="Masuy D."/>
            <person name="Pohl T."/>
            <person name="Portetelle D."/>
            <person name="Puehler A."/>
            <person name="Purnelle B."/>
            <person name="Ramsperger U."/>
            <person name="Renard C."/>
            <person name="Thebault P."/>
            <person name="Vandenbol M."/>
            <person name="Weidner S."/>
            <person name="Galibert F."/>
        </authorList>
    </citation>
    <scope>NUCLEOTIDE SEQUENCE [LARGE SCALE GENOMIC DNA]</scope>
    <source>
        <strain>1021</strain>
    </source>
</reference>
<reference key="4">
    <citation type="journal article" date="2001" name="Science">
        <title>The composite genome of the legume symbiont Sinorhizobium meliloti.</title>
        <authorList>
            <person name="Galibert F."/>
            <person name="Finan T.M."/>
            <person name="Long S.R."/>
            <person name="Puehler A."/>
            <person name="Abola P."/>
            <person name="Ampe F."/>
            <person name="Barloy-Hubler F."/>
            <person name="Barnett M.J."/>
            <person name="Becker A."/>
            <person name="Boistard P."/>
            <person name="Bothe G."/>
            <person name="Boutry M."/>
            <person name="Bowser L."/>
            <person name="Buhrmester J."/>
            <person name="Cadieu E."/>
            <person name="Capela D."/>
            <person name="Chain P."/>
            <person name="Cowie A."/>
            <person name="Davis R.W."/>
            <person name="Dreano S."/>
            <person name="Federspiel N.A."/>
            <person name="Fisher R.F."/>
            <person name="Gloux S."/>
            <person name="Godrie T."/>
            <person name="Goffeau A."/>
            <person name="Golding B."/>
            <person name="Gouzy J."/>
            <person name="Gurjal M."/>
            <person name="Hernandez-Lucas I."/>
            <person name="Hong A."/>
            <person name="Huizar L."/>
            <person name="Hyman R.W."/>
            <person name="Jones T."/>
            <person name="Kahn D."/>
            <person name="Kahn M.L."/>
            <person name="Kalman S."/>
            <person name="Keating D.H."/>
            <person name="Kiss E."/>
            <person name="Komp C."/>
            <person name="Lelaure V."/>
            <person name="Masuy D."/>
            <person name="Palm C."/>
            <person name="Peck M.C."/>
            <person name="Pohl T.M."/>
            <person name="Portetelle D."/>
            <person name="Purnelle B."/>
            <person name="Ramsperger U."/>
            <person name="Surzycki R."/>
            <person name="Thebault P."/>
            <person name="Vandenbol M."/>
            <person name="Vorhoelter F.J."/>
            <person name="Weidner S."/>
            <person name="Wells D.H."/>
            <person name="Wong K."/>
            <person name="Yeh K.-C."/>
            <person name="Batut J."/>
        </authorList>
    </citation>
    <scope>NUCLEOTIDE SEQUENCE [LARGE SCALE GENOMIC DNA]</scope>
    <source>
        <strain>1021</strain>
    </source>
</reference>
<accession>P17263</accession>
<accession>Q59751</accession>
<gene>
    <name type="primary">rpoN</name>
    <name type="synonym">ntrA</name>
    <name type="ordered locus">R00381</name>
    <name type="ORF">SMc01139</name>
</gene>
<protein>
    <recommendedName>
        <fullName>RNA polymerase sigma-54 factor</fullName>
    </recommendedName>
</protein>